<reference key="1">
    <citation type="journal article" date="2006" name="Gene">
        <title>Adaptive selection of mitochondrial complex I subunits during primate radiation.</title>
        <authorList>
            <person name="Mishmar D."/>
            <person name="Ruiz-Pesini E."/>
            <person name="Mondragon-Palomino M."/>
            <person name="Procaccio V."/>
            <person name="Gaut B."/>
            <person name="Wallace D.C."/>
        </authorList>
    </citation>
    <scope>NUCLEOTIDE SEQUENCE [MRNA]</scope>
</reference>
<name>NDUS2_GORGO</name>
<accession>Q0MQG4</accession>
<dbReference type="EC" id="7.1.1.2" evidence="4"/>
<dbReference type="EMBL" id="DQ885670">
    <property type="protein sequence ID" value="ABH12179.1"/>
    <property type="molecule type" value="mRNA"/>
</dbReference>
<dbReference type="RefSeq" id="NP_001266668.1">
    <property type="nucleotide sequence ID" value="NM_001279739.1"/>
</dbReference>
<dbReference type="RefSeq" id="XP_055206228.2">
    <property type="nucleotide sequence ID" value="XM_055350253.2"/>
</dbReference>
<dbReference type="RefSeq" id="XP_063566609.1">
    <property type="nucleotide sequence ID" value="XM_063710539.1"/>
</dbReference>
<dbReference type="SMR" id="Q0MQG4"/>
<dbReference type="FunCoup" id="Q0MQG4">
    <property type="interactions" value="1760"/>
</dbReference>
<dbReference type="STRING" id="9593.ENSGGOP00000044720"/>
<dbReference type="Ensembl" id="ENSGGOT00000007766.3">
    <property type="protein sequence ID" value="ENSGGOP00000007564.2"/>
    <property type="gene ID" value="ENSGGOG00000007729.3"/>
</dbReference>
<dbReference type="GeneID" id="101153768"/>
<dbReference type="CTD" id="4720"/>
<dbReference type="eggNOG" id="KOG2870">
    <property type="taxonomic scope" value="Eukaryota"/>
</dbReference>
<dbReference type="GeneTree" id="ENSGT00390000009529"/>
<dbReference type="HOGENOM" id="CLU_015134_1_1_1"/>
<dbReference type="InParanoid" id="Q0MQG4"/>
<dbReference type="Proteomes" id="UP000001519">
    <property type="component" value="Chromosome 1"/>
</dbReference>
<dbReference type="Bgee" id="ENSGGOG00000007729">
    <property type="expression patterns" value="Expressed in heart and 6 other cell types or tissues"/>
</dbReference>
<dbReference type="GO" id="GO:0005743">
    <property type="term" value="C:mitochondrial inner membrane"/>
    <property type="evidence" value="ECO:0000250"/>
    <property type="project" value="UniProtKB"/>
</dbReference>
<dbReference type="GO" id="GO:0005739">
    <property type="term" value="C:mitochondrion"/>
    <property type="evidence" value="ECO:0000250"/>
    <property type="project" value="UniProtKB"/>
</dbReference>
<dbReference type="GO" id="GO:0045271">
    <property type="term" value="C:respiratory chain complex I"/>
    <property type="evidence" value="ECO:0000250"/>
    <property type="project" value="UniProtKB"/>
</dbReference>
<dbReference type="GO" id="GO:0051539">
    <property type="term" value="F:4 iron, 4 sulfur cluster binding"/>
    <property type="evidence" value="ECO:0007669"/>
    <property type="project" value="UniProtKB-KW"/>
</dbReference>
<dbReference type="GO" id="GO:0046872">
    <property type="term" value="F:metal ion binding"/>
    <property type="evidence" value="ECO:0007669"/>
    <property type="project" value="UniProtKB-KW"/>
</dbReference>
<dbReference type="GO" id="GO:0051287">
    <property type="term" value="F:NAD binding"/>
    <property type="evidence" value="ECO:0007669"/>
    <property type="project" value="InterPro"/>
</dbReference>
<dbReference type="GO" id="GO:0008137">
    <property type="term" value="F:NADH dehydrogenase (ubiquinone) activity"/>
    <property type="evidence" value="ECO:0000250"/>
    <property type="project" value="UniProtKB"/>
</dbReference>
<dbReference type="GO" id="GO:0019826">
    <property type="term" value="F:oxygen sensor activity"/>
    <property type="evidence" value="ECO:0000250"/>
    <property type="project" value="UniProtKB"/>
</dbReference>
<dbReference type="GO" id="GO:0048038">
    <property type="term" value="F:quinone binding"/>
    <property type="evidence" value="ECO:0007669"/>
    <property type="project" value="InterPro"/>
</dbReference>
<dbReference type="GO" id="GO:0071453">
    <property type="term" value="P:cellular response to oxygen levels"/>
    <property type="evidence" value="ECO:0000250"/>
    <property type="project" value="UniProtKB"/>
</dbReference>
<dbReference type="GO" id="GO:0042063">
    <property type="term" value="P:gliogenesis"/>
    <property type="evidence" value="ECO:0000250"/>
    <property type="project" value="UniProtKB"/>
</dbReference>
<dbReference type="GO" id="GO:0006120">
    <property type="term" value="P:mitochondrial electron transport, NADH to ubiquinone"/>
    <property type="evidence" value="ECO:0000250"/>
    <property type="project" value="UniProtKB"/>
</dbReference>
<dbReference type="GO" id="GO:0032981">
    <property type="term" value="P:mitochondrial respiratory chain complex I assembly"/>
    <property type="evidence" value="ECO:0000250"/>
    <property type="project" value="UniProtKB"/>
</dbReference>
<dbReference type="GO" id="GO:0061351">
    <property type="term" value="P:neural precursor cell proliferation"/>
    <property type="evidence" value="ECO:0000250"/>
    <property type="project" value="UniProtKB"/>
</dbReference>
<dbReference type="GO" id="GO:0022008">
    <property type="term" value="P:neurogenesis"/>
    <property type="evidence" value="ECO:0000250"/>
    <property type="project" value="UniProtKB"/>
</dbReference>
<dbReference type="FunFam" id="1.10.645.10:FF:000005">
    <property type="entry name" value="NADH-quinone oxidoreductase subunit D"/>
    <property type="match status" value="1"/>
</dbReference>
<dbReference type="Gene3D" id="1.10.645.10">
    <property type="entry name" value="Cytochrome-c3 Hydrogenase, chain B"/>
    <property type="match status" value="1"/>
</dbReference>
<dbReference type="HAMAP" id="MF_01358">
    <property type="entry name" value="NDH1_NuoD"/>
    <property type="match status" value="1"/>
</dbReference>
<dbReference type="InterPro" id="IPR001135">
    <property type="entry name" value="NADH_Q_OxRdtase_suD"/>
</dbReference>
<dbReference type="InterPro" id="IPR014029">
    <property type="entry name" value="NADH_UbQ_OxRdtase_49kDa_CS"/>
</dbReference>
<dbReference type="InterPro" id="IPR022885">
    <property type="entry name" value="NDH1_su_D/H"/>
</dbReference>
<dbReference type="InterPro" id="IPR029014">
    <property type="entry name" value="NiFe-Hase_large"/>
</dbReference>
<dbReference type="NCBIfam" id="TIGR01962">
    <property type="entry name" value="NuoD"/>
    <property type="match status" value="1"/>
</dbReference>
<dbReference type="NCBIfam" id="NF004739">
    <property type="entry name" value="PRK06075.1"/>
    <property type="match status" value="1"/>
</dbReference>
<dbReference type="PANTHER" id="PTHR11993:SF10">
    <property type="entry name" value="NADH DEHYDROGENASE [UBIQUINONE] IRON-SULFUR PROTEIN 2, MITOCHONDRIAL"/>
    <property type="match status" value="1"/>
</dbReference>
<dbReference type="PANTHER" id="PTHR11993">
    <property type="entry name" value="NADH-UBIQUINONE OXIDOREDUCTASE 49 KDA SUBUNIT"/>
    <property type="match status" value="1"/>
</dbReference>
<dbReference type="Pfam" id="PF00346">
    <property type="entry name" value="Complex1_49kDa"/>
    <property type="match status" value="1"/>
</dbReference>
<dbReference type="SUPFAM" id="SSF56762">
    <property type="entry name" value="HydB/Nqo4-like"/>
    <property type="match status" value="1"/>
</dbReference>
<dbReference type="PROSITE" id="PS00535">
    <property type="entry name" value="COMPLEX1_49K"/>
    <property type="match status" value="1"/>
</dbReference>
<protein>
    <recommendedName>
        <fullName>NADH dehydrogenase [ubiquinone] iron-sulfur protein 2, mitochondrial</fullName>
        <ecNumber evidence="4">7.1.1.2</ecNumber>
    </recommendedName>
    <alternativeName>
        <fullName>Complex I-49kD</fullName>
        <shortName>CI-49kD</shortName>
    </alternativeName>
    <alternativeName>
        <fullName>NADH-ubiquinone oxidoreductase 49 kDa subunit</fullName>
    </alternativeName>
</protein>
<comment type="function">
    <text evidence="4">Core subunit of the mitochondrial membrane respiratory chain NADH dehydrogenase (Complex I) which catalyzes electron transfer from NADH through the respiratory chain, using ubiquinone as an electron acceptor (By similarity). Essential for the catalytic activity and assembly of complex I (By similarity). Redox-sensitive, critical component of the oxygen-sensing pathway in the pulmonary vasculature which plays a key role in acute pulmonary oxygen-sensing and hypoxic pulmonary vasoconstriction (By similarity). Plays an important role in carotid body sensing of hypoxia (By similarity). Essential for glia-like neural stem and progenitor cell proliferation, differentiation and subsequent oligodendrocyte or neuronal maturation (By similarity).</text>
</comment>
<comment type="catalytic activity">
    <reaction evidence="4">
        <text>a ubiquinone + NADH + 5 H(+)(in) = a ubiquinol + NAD(+) + 4 H(+)(out)</text>
        <dbReference type="Rhea" id="RHEA:29091"/>
        <dbReference type="Rhea" id="RHEA-COMP:9565"/>
        <dbReference type="Rhea" id="RHEA-COMP:9566"/>
        <dbReference type="ChEBI" id="CHEBI:15378"/>
        <dbReference type="ChEBI" id="CHEBI:16389"/>
        <dbReference type="ChEBI" id="CHEBI:17976"/>
        <dbReference type="ChEBI" id="CHEBI:57540"/>
        <dbReference type="ChEBI" id="CHEBI:57945"/>
        <dbReference type="EC" id="7.1.1.2"/>
    </reaction>
</comment>
<comment type="cofactor">
    <cofactor>
        <name>[4Fe-4S] cluster</name>
        <dbReference type="ChEBI" id="CHEBI:49883"/>
    </cofactor>
    <text>Binds 1 [4Fe-4S] cluster.</text>
</comment>
<comment type="subunit">
    <text evidence="1 4">Core subunit of respiratory chain NADH dehydrogenase (Complex I) which is composed of 45 different subunits. Component of the iron-sulfur (IP) fragment of the enzyme. Interacts with NDUFAF3. Interacts with NDUFAF7 (By similarity). Interacts with CERS2 (By similarity).</text>
</comment>
<comment type="subcellular location">
    <subcellularLocation>
        <location evidence="3">Mitochondrion inner membrane</location>
        <topology evidence="3">Peripheral membrane protein</topology>
        <orientation evidence="3">Matrix side</orientation>
    </subcellularLocation>
</comment>
<comment type="PTM">
    <text evidence="1">Dimethylation at Arg-118 by NDUFAF7 takes place after NDUFS2 assembles into the complex I, leading to stabilize the early intermediate complex.</text>
</comment>
<comment type="similarity">
    <text evidence="6">Belongs to the complex I 49 kDa subunit family.</text>
</comment>
<sequence length="463" mass="52558">MAALRVLCGLRGVAAQVLRPGAGVRLPIQPSRGVRQWQPDVEWAQQFGGAVMYPSKETAHWKPPPWNDVDPPKDTIVKNMTLNFGPQHPAAHGVLRLVMELSGEMVRKCDPHIGLLHRGTEKLIEYKTYLQALPYFDRLDYVSMMCNEQAYSLAVEKLLNIRPPPRAQWIRVLFGEITRLLNHIMAVTTHALDLGAMTPFFWLFEEREKMFEFYERVSGARMHAAYIRPGGVHQDLPLGLMDDIYQFSKNFSLRLDELEELLTNNRIWRNRTIDIGVVTAEEALNYGFSGVMLRGSGIQWDLRKTQPYDVYDQVEFDVPVGSRGDCYDRYLCRVEEMRQSLRIIAQCLNKMPPGEIKVDDAKVSPPKRAEMKTSMESLIHHFKLYTEGYQVPPGATYTAIEAPKGEFGVYLVSDGSSRPYRCKIKAPGFAHLAGLDKMSKGHMLADVVAIIGTQDIVFGEVDR</sequence>
<evidence type="ECO:0000250" key="1">
    <source>
        <dbReference type="UniProtKB" id="O75306"/>
    </source>
</evidence>
<evidence type="ECO:0000250" key="2">
    <source>
        <dbReference type="UniProtKB" id="P17694"/>
    </source>
</evidence>
<evidence type="ECO:0000250" key="3">
    <source>
        <dbReference type="UniProtKB" id="Q641Y2"/>
    </source>
</evidence>
<evidence type="ECO:0000250" key="4">
    <source>
        <dbReference type="UniProtKB" id="Q91WD5"/>
    </source>
</evidence>
<evidence type="ECO:0000255" key="5"/>
<evidence type="ECO:0000305" key="6"/>
<proteinExistence type="evidence at transcript level"/>
<gene>
    <name type="primary">NDUFS2</name>
</gene>
<keyword id="KW-0004">4Fe-4S</keyword>
<keyword id="KW-0007">Acetylation</keyword>
<keyword id="KW-0249">Electron transport</keyword>
<keyword id="KW-0408">Iron</keyword>
<keyword id="KW-0411">Iron-sulfur</keyword>
<keyword id="KW-0472">Membrane</keyword>
<keyword id="KW-0479">Metal-binding</keyword>
<keyword id="KW-0488">Methylation</keyword>
<keyword id="KW-0496">Mitochondrion</keyword>
<keyword id="KW-0999">Mitochondrion inner membrane</keyword>
<keyword id="KW-0520">NAD</keyword>
<keyword id="KW-0560">Oxidoreductase</keyword>
<keyword id="KW-1185">Reference proteome</keyword>
<keyword id="KW-0679">Respiratory chain</keyword>
<keyword id="KW-0809">Transit peptide</keyword>
<keyword id="KW-1278">Translocase</keyword>
<keyword id="KW-0813">Transport</keyword>
<keyword id="KW-0830">Ubiquinone</keyword>
<feature type="transit peptide" description="Mitochondrion" evidence="2">
    <location>
        <begin position="1"/>
        <end position="33"/>
    </location>
</feature>
<feature type="chain" id="PRO_0000251856" description="NADH dehydrogenase [ubiquinone] iron-sulfur protein 2, mitochondrial">
    <location>
        <begin position="34"/>
        <end position="463"/>
    </location>
</feature>
<feature type="binding site" evidence="5">
    <location>
        <position position="326"/>
    </location>
    <ligand>
        <name>[4Fe-4S] cluster</name>
        <dbReference type="ChEBI" id="CHEBI:49883"/>
    </ligand>
</feature>
<feature type="binding site" evidence="5">
    <location>
        <position position="332"/>
    </location>
    <ligand>
        <name>[4Fe-4S] cluster</name>
        <dbReference type="ChEBI" id="CHEBI:49883"/>
    </ligand>
</feature>
<feature type="binding site" evidence="5">
    <location>
        <position position="347"/>
    </location>
    <ligand>
        <name>[4Fe-4S] cluster</name>
        <dbReference type="ChEBI" id="CHEBI:49883"/>
    </ligand>
</feature>
<feature type="modified residue" description="N6-acetyllysine" evidence="4">
    <location>
        <position position="62"/>
    </location>
</feature>
<feature type="modified residue" description="Symmetric dimethylarginine" evidence="2">
    <location>
        <position position="118"/>
    </location>
</feature>
<organism>
    <name type="scientific">Gorilla gorilla gorilla</name>
    <name type="common">Western lowland gorilla</name>
    <dbReference type="NCBI Taxonomy" id="9595"/>
    <lineage>
        <taxon>Eukaryota</taxon>
        <taxon>Metazoa</taxon>
        <taxon>Chordata</taxon>
        <taxon>Craniata</taxon>
        <taxon>Vertebrata</taxon>
        <taxon>Euteleostomi</taxon>
        <taxon>Mammalia</taxon>
        <taxon>Eutheria</taxon>
        <taxon>Euarchontoglires</taxon>
        <taxon>Primates</taxon>
        <taxon>Haplorrhini</taxon>
        <taxon>Catarrhini</taxon>
        <taxon>Hominidae</taxon>
        <taxon>Gorilla</taxon>
    </lineage>
</organism>